<organism>
    <name type="scientific">Agathobacter rectalis (strain ATCC 33656 / DSM 3377 / JCM 17463 / KCTC 5835 / VPI 0990)</name>
    <name type="common">Eubacterium rectale</name>
    <dbReference type="NCBI Taxonomy" id="515619"/>
    <lineage>
        <taxon>Bacteria</taxon>
        <taxon>Bacillati</taxon>
        <taxon>Bacillota</taxon>
        <taxon>Clostridia</taxon>
        <taxon>Lachnospirales</taxon>
        <taxon>Lachnospiraceae</taxon>
        <taxon>Agathobacter</taxon>
    </lineage>
</organism>
<protein>
    <recommendedName>
        <fullName evidence="1">UvrABC system protein B</fullName>
        <shortName evidence="1">Protein UvrB</shortName>
    </recommendedName>
    <alternativeName>
        <fullName evidence="1">Excinuclease ABC subunit B</fullName>
    </alternativeName>
</protein>
<proteinExistence type="inferred from homology"/>
<evidence type="ECO:0000255" key="1">
    <source>
        <dbReference type="HAMAP-Rule" id="MF_00204"/>
    </source>
</evidence>
<accession>C4ZHN1</accession>
<feature type="chain" id="PRO_1000204133" description="UvrABC system protein B">
    <location>
        <begin position="1"/>
        <end position="660"/>
    </location>
</feature>
<feature type="domain" description="Helicase ATP-binding" evidence="1">
    <location>
        <begin position="24"/>
        <end position="177"/>
    </location>
</feature>
<feature type="domain" description="Helicase C-terminal" evidence="1">
    <location>
        <begin position="428"/>
        <end position="594"/>
    </location>
</feature>
<feature type="domain" description="UVR" evidence="1">
    <location>
        <begin position="620"/>
        <end position="655"/>
    </location>
</feature>
<feature type="short sequence motif" description="Beta-hairpin">
    <location>
        <begin position="90"/>
        <end position="113"/>
    </location>
</feature>
<feature type="binding site" evidence="1">
    <location>
        <begin position="37"/>
        <end position="44"/>
    </location>
    <ligand>
        <name>ATP</name>
        <dbReference type="ChEBI" id="CHEBI:30616"/>
    </ligand>
</feature>
<name>UVRB_AGARV</name>
<comment type="function">
    <text evidence="1">The UvrABC repair system catalyzes the recognition and processing of DNA lesions. A damage recognition complex composed of 2 UvrA and 2 UvrB subunits scans DNA for abnormalities. Upon binding of the UvrA(2)B(2) complex to a putative damaged site, the DNA wraps around one UvrB monomer. DNA wrap is dependent on ATP binding by UvrB and probably causes local melting of the DNA helix, facilitating insertion of UvrB beta-hairpin between the DNA strands. Then UvrB probes one DNA strand for the presence of a lesion. If a lesion is found the UvrA subunits dissociate and the UvrB-DNA preincision complex is formed. This complex is subsequently bound by UvrC and the second UvrB is released. If no lesion is found, the DNA wraps around the other UvrB subunit that will check the other stand for damage.</text>
</comment>
<comment type="subunit">
    <text evidence="1">Forms a heterotetramer with UvrA during the search for lesions. Interacts with UvrC in an incision complex.</text>
</comment>
<comment type="subcellular location">
    <subcellularLocation>
        <location evidence="1">Cytoplasm</location>
    </subcellularLocation>
</comment>
<comment type="domain">
    <text evidence="1">The beta-hairpin motif is involved in DNA binding.</text>
</comment>
<comment type="similarity">
    <text evidence="1">Belongs to the UvrB family.</text>
</comment>
<sequence>MEFKLHSKYKPTGDQPQAIEQLVKGFKEGNQFETLLGVTGSGKTFTMANVIAALNKPTLIISHNKTLAGQLYGEMKEFFPENAVEYFVSYYDYYQPEAYVPQSDTYIAKDSSVNDEIDKLRLSATAALTERKDVIVVASVSCIYGLGSPDEWTGMSISLRPGQERDRDDLARALIDLQYTRNDMDFHRGTFRVHGDVLDIFPANADDTAIRVEFFGDEIDRIVEVDVLTGEVKCSLEHTMIFPASHYVVSQEKINEACLNIEKELDERVKYFKGEDKLIEAQRIAERTNFDIEMMRETGFCSGIENYTRHLNFAKPGEPPMTLIDFFPDDFLIIVDESHITIPQIGGMYAGDRSRKTTLVDYGFRLPSALDNRPLNFEEFEGKIDQMLFVSATPNKYENEHELLRAEQIIRPTGLLDPEISVRPVEGQIDDLVSEVNKETANHHKVLITTLTKRMAEDLTNYMAELGIRVKYLHSDIDTLERAEIIRDLRLDVFDVLVGINLLREGLDIPEITLVAILDADKEGFLRSETSLIQTIGRAARNSEGHVIMYADKITDSMRVAIDETKRRRKVQEEYNEAHGITPQTIQKSVRDLIAISKKVAADENALDKDPESMSKKELEKHIADIEKKMKKAAAELNFEAAAEYRDKLIMLKNTLRDIR</sequence>
<keyword id="KW-0067">ATP-binding</keyword>
<keyword id="KW-0963">Cytoplasm</keyword>
<keyword id="KW-0227">DNA damage</keyword>
<keyword id="KW-0228">DNA excision</keyword>
<keyword id="KW-0234">DNA repair</keyword>
<keyword id="KW-0267">Excision nuclease</keyword>
<keyword id="KW-0347">Helicase</keyword>
<keyword id="KW-0378">Hydrolase</keyword>
<keyword id="KW-0547">Nucleotide-binding</keyword>
<keyword id="KW-0742">SOS response</keyword>
<gene>
    <name evidence="1" type="primary">uvrB</name>
    <name type="ordered locus">EUBREC_2788</name>
</gene>
<reference key="1">
    <citation type="journal article" date="2009" name="Proc. Natl. Acad. Sci. U.S.A.">
        <title>Characterizing a model human gut microbiota composed of members of its two dominant bacterial phyla.</title>
        <authorList>
            <person name="Mahowald M.A."/>
            <person name="Rey F.E."/>
            <person name="Seedorf H."/>
            <person name="Turnbaugh P.J."/>
            <person name="Fulton R.S."/>
            <person name="Wollam A."/>
            <person name="Shah N."/>
            <person name="Wang C."/>
            <person name="Magrini V."/>
            <person name="Wilson R.K."/>
            <person name="Cantarel B.L."/>
            <person name="Coutinho P.M."/>
            <person name="Henrissat B."/>
            <person name="Crock L.W."/>
            <person name="Russell A."/>
            <person name="Verberkmoes N.C."/>
            <person name="Hettich R.L."/>
            <person name="Gordon J.I."/>
        </authorList>
    </citation>
    <scope>NUCLEOTIDE SEQUENCE [LARGE SCALE GENOMIC DNA]</scope>
    <source>
        <strain>ATCC 33656 / DSM 3377 / JCM 17463 / KCTC 5835 / LMG 30912 / VPI 0990</strain>
    </source>
</reference>
<dbReference type="EMBL" id="CP001107">
    <property type="protein sequence ID" value="ACR76518.1"/>
    <property type="molecule type" value="Genomic_DNA"/>
</dbReference>
<dbReference type="RefSeq" id="WP_012743546.1">
    <property type="nucleotide sequence ID" value="NC_012781.1"/>
</dbReference>
<dbReference type="SMR" id="C4ZHN1"/>
<dbReference type="STRING" id="515619.EUBREC_2788"/>
<dbReference type="PaxDb" id="515619-EUBREC_2788"/>
<dbReference type="GeneID" id="86989504"/>
<dbReference type="KEGG" id="ere:EUBREC_2788"/>
<dbReference type="HOGENOM" id="CLU_009621_2_1_9"/>
<dbReference type="Proteomes" id="UP000001477">
    <property type="component" value="Chromosome"/>
</dbReference>
<dbReference type="GO" id="GO:0005737">
    <property type="term" value="C:cytoplasm"/>
    <property type="evidence" value="ECO:0007669"/>
    <property type="project" value="UniProtKB-SubCell"/>
</dbReference>
<dbReference type="GO" id="GO:0009380">
    <property type="term" value="C:excinuclease repair complex"/>
    <property type="evidence" value="ECO:0007669"/>
    <property type="project" value="InterPro"/>
</dbReference>
<dbReference type="GO" id="GO:0005524">
    <property type="term" value="F:ATP binding"/>
    <property type="evidence" value="ECO:0007669"/>
    <property type="project" value="UniProtKB-UniRule"/>
</dbReference>
<dbReference type="GO" id="GO:0016887">
    <property type="term" value="F:ATP hydrolysis activity"/>
    <property type="evidence" value="ECO:0007669"/>
    <property type="project" value="InterPro"/>
</dbReference>
<dbReference type="GO" id="GO:0003677">
    <property type="term" value="F:DNA binding"/>
    <property type="evidence" value="ECO:0007669"/>
    <property type="project" value="UniProtKB-UniRule"/>
</dbReference>
<dbReference type="GO" id="GO:0009381">
    <property type="term" value="F:excinuclease ABC activity"/>
    <property type="evidence" value="ECO:0007669"/>
    <property type="project" value="UniProtKB-UniRule"/>
</dbReference>
<dbReference type="GO" id="GO:0004386">
    <property type="term" value="F:helicase activity"/>
    <property type="evidence" value="ECO:0007669"/>
    <property type="project" value="UniProtKB-KW"/>
</dbReference>
<dbReference type="GO" id="GO:0006289">
    <property type="term" value="P:nucleotide-excision repair"/>
    <property type="evidence" value="ECO:0007669"/>
    <property type="project" value="UniProtKB-UniRule"/>
</dbReference>
<dbReference type="GO" id="GO:0009432">
    <property type="term" value="P:SOS response"/>
    <property type="evidence" value="ECO:0007669"/>
    <property type="project" value="UniProtKB-UniRule"/>
</dbReference>
<dbReference type="CDD" id="cd17916">
    <property type="entry name" value="DEXHc_UvrB"/>
    <property type="match status" value="1"/>
</dbReference>
<dbReference type="CDD" id="cd18790">
    <property type="entry name" value="SF2_C_UvrB"/>
    <property type="match status" value="1"/>
</dbReference>
<dbReference type="Gene3D" id="6.10.140.240">
    <property type="match status" value="1"/>
</dbReference>
<dbReference type="Gene3D" id="3.40.50.300">
    <property type="entry name" value="P-loop containing nucleotide triphosphate hydrolases"/>
    <property type="match status" value="3"/>
</dbReference>
<dbReference type="Gene3D" id="4.10.860.10">
    <property type="entry name" value="UVR domain"/>
    <property type="match status" value="1"/>
</dbReference>
<dbReference type="HAMAP" id="MF_00204">
    <property type="entry name" value="UvrB"/>
    <property type="match status" value="1"/>
</dbReference>
<dbReference type="InterPro" id="IPR006935">
    <property type="entry name" value="Helicase/UvrB_N"/>
</dbReference>
<dbReference type="InterPro" id="IPR014001">
    <property type="entry name" value="Helicase_ATP-bd"/>
</dbReference>
<dbReference type="InterPro" id="IPR001650">
    <property type="entry name" value="Helicase_C-like"/>
</dbReference>
<dbReference type="InterPro" id="IPR027417">
    <property type="entry name" value="P-loop_NTPase"/>
</dbReference>
<dbReference type="InterPro" id="IPR001943">
    <property type="entry name" value="UVR_dom"/>
</dbReference>
<dbReference type="InterPro" id="IPR036876">
    <property type="entry name" value="UVR_dom_sf"/>
</dbReference>
<dbReference type="InterPro" id="IPR004807">
    <property type="entry name" value="UvrB"/>
</dbReference>
<dbReference type="InterPro" id="IPR041471">
    <property type="entry name" value="UvrB_inter"/>
</dbReference>
<dbReference type="InterPro" id="IPR024759">
    <property type="entry name" value="UvrB_YAD/RRR_dom"/>
</dbReference>
<dbReference type="NCBIfam" id="NF003673">
    <property type="entry name" value="PRK05298.1"/>
    <property type="match status" value="1"/>
</dbReference>
<dbReference type="NCBIfam" id="TIGR00631">
    <property type="entry name" value="uvrb"/>
    <property type="match status" value="1"/>
</dbReference>
<dbReference type="PANTHER" id="PTHR24029">
    <property type="entry name" value="UVRABC SYSTEM PROTEIN B"/>
    <property type="match status" value="1"/>
</dbReference>
<dbReference type="PANTHER" id="PTHR24029:SF0">
    <property type="entry name" value="UVRABC SYSTEM PROTEIN B"/>
    <property type="match status" value="1"/>
</dbReference>
<dbReference type="Pfam" id="PF00271">
    <property type="entry name" value="Helicase_C"/>
    <property type="match status" value="1"/>
</dbReference>
<dbReference type="Pfam" id="PF04851">
    <property type="entry name" value="ResIII"/>
    <property type="match status" value="1"/>
</dbReference>
<dbReference type="Pfam" id="PF02151">
    <property type="entry name" value="UVR"/>
    <property type="match status" value="1"/>
</dbReference>
<dbReference type="Pfam" id="PF12344">
    <property type="entry name" value="UvrB"/>
    <property type="match status" value="1"/>
</dbReference>
<dbReference type="Pfam" id="PF17757">
    <property type="entry name" value="UvrB_inter"/>
    <property type="match status" value="1"/>
</dbReference>
<dbReference type="SMART" id="SM00487">
    <property type="entry name" value="DEXDc"/>
    <property type="match status" value="1"/>
</dbReference>
<dbReference type="SMART" id="SM00490">
    <property type="entry name" value="HELICc"/>
    <property type="match status" value="1"/>
</dbReference>
<dbReference type="SUPFAM" id="SSF46600">
    <property type="entry name" value="C-terminal UvrC-binding domain of UvrB"/>
    <property type="match status" value="1"/>
</dbReference>
<dbReference type="SUPFAM" id="SSF52540">
    <property type="entry name" value="P-loop containing nucleoside triphosphate hydrolases"/>
    <property type="match status" value="2"/>
</dbReference>
<dbReference type="PROSITE" id="PS51192">
    <property type="entry name" value="HELICASE_ATP_BIND_1"/>
    <property type="match status" value="1"/>
</dbReference>
<dbReference type="PROSITE" id="PS51194">
    <property type="entry name" value="HELICASE_CTER"/>
    <property type="match status" value="1"/>
</dbReference>
<dbReference type="PROSITE" id="PS50151">
    <property type="entry name" value="UVR"/>
    <property type="match status" value="1"/>
</dbReference>